<protein>
    <recommendedName>
        <fullName>Transcriptional activator Myb</fullName>
    </recommendedName>
    <alternativeName>
        <fullName>Proto-oncogene c-Myb</fullName>
    </alternativeName>
</protein>
<sequence length="640" mass="72511">MARRPRHSIYSSDEDDEDIEMCDHDYDGLLPKSGKRHLGKTRWTREEDEKLKKLVEQNGTDDWKVIANYLPNRTDVQCQHRWQKVLNPELIKGPWTKEEDQRVIELVQKYGPKRWSVIAKHLKGRIGKQCRERWHNHLNPEVKKTSWTEEEDRIIYQAHKRLGNRWAEIAKLLPGRTDNAIKNHWNSTMRRKVEQEGYLQESSKASQPAVTTSFQKNSHLMGFTHAPPSAQLPPAGQPSVNSDYPYYHISEAQNVSSHVPYPVALHVNIVNVPQPAAAAIQRHYNDEDPEKEKRIKELELLLMSTENELKGQQALPTQNHTCSYPGWHSTTIADHTRPHGDSAPVSCLEEHHSTPSLPADPGSLPEESASPARCMIFHQSTILDNVKNLLEFAETLQFIDSFLNTSNNHENLDLEMPSLTSTPLNGHKLTVTTPFHRDQTVKIQKENTIFRTPAIKRSILEGSPRTPTPFKHALTAQEIKYGPLKMLPQTPSHLVEDLQDEIKQESDESGIVAEFQENGQPLLKKIKQEVESPTDKAGNFFCSNHWEGDSLNTQLFTQASPVADMPNILTSSVLMTPVSEDEDNVLKAFTVPKSRSLASPLQPCNGAWESASCGKTDDQMTASGQSRKYVNAFSTRTLVM</sequence>
<keyword id="KW-0007">Acetylation</keyword>
<keyword id="KW-0010">Activator</keyword>
<keyword id="KW-0238">DNA-binding</keyword>
<keyword id="KW-1017">Isopeptide bond</keyword>
<keyword id="KW-0539">Nucleus</keyword>
<keyword id="KW-0597">Phosphoprotein</keyword>
<keyword id="KW-0656">Proto-oncogene</keyword>
<keyword id="KW-1185">Reference proteome</keyword>
<keyword id="KW-0677">Repeat</keyword>
<keyword id="KW-0804">Transcription</keyword>
<keyword id="KW-0805">Transcription regulation</keyword>
<keyword id="KW-0832">Ubl conjugation</keyword>
<dbReference type="EMBL" id="D26147">
    <property type="protein sequence ID" value="BAA05135.1"/>
    <property type="molecule type" value="mRNA"/>
</dbReference>
<dbReference type="PIR" id="A55073">
    <property type="entry name" value="A55073"/>
</dbReference>
<dbReference type="BMRB" id="P46200"/>
<dbReference type="SMR" id="P46200"/>
<dbReference type="FunCoup" id="P46200">
    <property type="interactions" value="620"/>
</dbReference>
<dbReference type="STRING" id="9913.ENSBTAP00000071316"/>
<dbReference type="PaxDb" id="9913-ENSBTAP00000043305"/>
<dbReference type="eggNOG" id="KOG0048">
    <property type="taxonomic scope" value="Eukaryota"/>
</dbReference>
<dbReference type="InParanoid" id="P46200"/>
<dbReference type="OrthoDB" id="2143914at2759"/>
<dbReference type="Proteomes" id="UP000009136">
    <property type="component" value="Unplaced"/>
</dbReference>
<dbReference type="GO" id="GO:0005634">
    <property type="term" value="C:nucleus"/>
    <property type="evidence" value="ECO:0000318"/>
    <property type="project" value="GO_Central"/>
</dbReference>
<dbReference type="GO" id="GO:0000981">
    <property type="term" value="F:DNA-binding transcription factor activity, RNA polymerase II-specific"/>
    <property type="evidence" value="ECO:0000318"/>
    <property type="project" value="GO_Central"/>
</dbReference>
<dbReference type="GO" id="GO:0000978">
    <property type="term" value="F:RNA polymerase II cis-regulatory region sequence-specific DNA binding"/>
    <property type="evidence" value="ECO:0000318"/>
    <property type="project" value="GO_Central"/>
</dbReference>
<dbReference type="GO" id="GO:0000278">
    <property type="term" value="P:mitotic cell cycle"/>
    <property type="evidence" value="ECO:0000318"/>
    <property type="project" value="GO_Central"/>
</dbReference>
<dbReference type="GO" id="GO:0045944">
    <property type="term" value="P:positive regulation of transcription by RNA polymerase II"/>
    <property type="evidence" value="ECO:0000318"/>
    <property type="project" value="GO_Central"/>
</dbReference>
<dbReference type="CDD" id="cd00167">
    <property type="entry name" value="SANT"/>
    <property type="match status" value="3"/>
</dbReference>
<dbReference type="FunFam" id="1.10.10.60:FF:000010">
    <property type="entry name" value="Transcriptional activator Myb isoform A"/>
    <property type="match status" value="1"/>
</dbReference>
<dbReference type="FunFam" id="1.10.10.60:FF:000016">
    <property type="entry name" value="Transcriptional activator Myb isoform A"/>
    <property type="match status" value="1"/>
</dbReference>
<dbReference type="FunFam" id="1.10.10.60:FF:000042">
    <property type="entry name" value="Transcriptional activator Myb isoform A"/>
    <property type="match status" value="1"/>
</dbReference>
<dbReference type="Gene3D" id="1.10.10.60">
    <property type="entry name" value="Homeodomain-like"/>
    <property type="match status" value="3"/>
</dbReference>
<dbReference type="InterPro" id="IPR015395">
    <property type="entry name" value="C-myb_C"/>
</dbReference>
<dbReference type="InterPro" id="IPR009057">
    <property type="entry name" value="Homeodomain-like_sf"/>
</dbReference>
<dbReference type="InterPro" id="IPR017930">
    <property type="entry name" value="Myb_dom"/>
</dbReference>
<dbReference type="InterPro" id="IPR050560">
    <property type="entry name" value="MYB_TF"/>
</dbReference>
<dbReference type="InterPro" id="IPR001005">
    <property type="entry name" value="SANT/Myb"/>
</dbReference>
<dbReference type="InterPro" id="IPR012642">
    <property type="entry name" value="Tscrpt_reg_Wos2-domain"/>
</dbReference>
<dbReference type="PANTHER" id="PTHR45614">
    <property type="entry name" value="MYB PROTEIN-RELATED"/>
    <property type="match status" value="1"/>
</dbReference>
<dbReference type="PANTHER" id="PTHR45614:SF51">
    <property type="entry name" value="MYB-LIKE DNA-BINDING PROTEIN BAS1"/>
    <property type="match status" value="1"/>
</dbReference>
<dbReference type="Pfam" id="PF09316">
    <property type="entry name" value="Cmyb_C"/>
    <property type="match status" value="1"/>
</dbReference>
<dbReference type="Pfam" id="PF07988">
    <property type="entry name" value="LMSTEN"/>
    <property type="match status" value="1"/>
</dbReference>
<dbReference type="Pfam" id="PF00249">
    <property type="entry name" value="Myb_DNA-binding"/>
    <property type="match status" value="3"/>
</dbReference>
<dbReference type="SMART" id="SM00717">
    <property type="entry name" value="SANT"/>
    <property type="match status" value="3"/>
</dbReference>
<dbReference type="SUPFAM" id="SSF46689">
    <property type="entry name" value="Homeodomain-like"/>
    <property type="match status" value="2"/>
</dbReference>
<dbReference type="PROSITE" id="PS51294">
    <property type="entry name" value="HTH_MYB"/>
    <property type="match status" value="3"/>
</dbReference>
<organism>
    <name type="scientific">Bos taurus</name>
    <name type="common">Bovine</name>
    <dbReference type="NCBI Taxonomy" id="9913"/>
    <lineage>
        <taxon>Eukaryota</taxon>
        <taxon>Metazoa</taxon>
        <taxon>Chordata</taxon>
        <taxon>Craniata</taxon>
        <taxon>Vertebrata</taxon>
        <taxon>Euteleostomi</taxon>
        <taxon>Mammalia</taxon>
        <taxon>Eutheria</taxon>
        <taxon>Laurasiatheria</taxon>
        <taxon>Artiodactyla</taxon>
        <taxon>Ruminantia</taxon>
        <taxon>Pecora</taxon>
        <taxon>Bovidae</taxon>
        <taxon>Bovinae</taxon>
        <taxon>Bos</taxon>
    </lineage>
</organism>
<proteinExistence type="evidence at transcript level"/>
<comment type="function">
    <text>Transcriptional activator; DNA-binding protein that specifically recognize the sequence 5'-YAAC[GT]G-3'. Plays an important role in the control of proliferation and differentiation of hematopoietic progenitor cells.</text>
</comment>
<comment type="subunit">
    <text evidence="1">Interacts with HIPK1, HIPK2, MAF and NLK.</text>
</comment>
<comment type="subcellular location">
    <subcellularLocation>
        <location evidence="2">Nucleus</location>
    </subcellularLocation>
</comment>
<comment type="domain">
    <text>Comprised of 3 domains; an N-terminal DNA-binding domain, a centrally located transcriptional activation domain and a C-terminal domain involved in transcriptional repression.</text>
</comment>
<comment type="PTM">
    <text evidence="2">SUMOylated by TRAF7; leading to MYB transcriptional activity inhibition.</text>
</comment>
<comment type="PTM">
    <text evidence="1">Phosphorylated by NLK on multiple sites, which induces proteasomal degradation.</text>
</comment>
<comment type="PTM">
    <text evidence="1">Phosphorylated by HIPK1. This phosphorylation reduces MYB transcription factor activity but not MYB protein levels (By similarity).</text>
</comment>
<name>MYB_BOVIN</name>
<evidence type="ECO:0000250" key="1"/>
<evidence type="ECO:0000250" key="2">
    <source>
        <dbReference type="UniProtKB" id="P06876"/>
    </source>
</evidence>
<evidence type="ECO:0000250" key="3">
    <source>
        <dbReference type="UniProtKB" id="P10242"/>
    </source>
</evidence>
<evidence type="ECO:0000255" key="4">
    <source>
        <dbReference type="PROSITE-ProRule" id="PRU00625"/>
    </source>
</evidence>
<evidence type="ECO:0000256" key="5">
    <source>
        <dbReference type="SAM" id="MobiDB-lite"/>
    </source>
</evidence>
<accession>P46200</accession>
<feature type="chain" id="PRO_0000197047" description="Transcriptional activator Myb">
    <location>
        <begin position="1"/>
        <end position="640"/>
    </location>
</feature>
<feature type="domain" description="HTH myb-type 1" evidence="4">
    <location>
        <begin position="35"/>
        <end position="86"/>
    </location>
</feature>
<feature type="domain" description="HTH myb-type 2" evidence="4">
    <location>
        <begin position="87"/>
        <end position="142"/>
    </location>
</feature>
<feature type="domain" description="HTH myb-type 3" evidence="4">
    <location>
        <begin position="143"/>
        <end position="193"/>
    </location>
</feature>
<feature type="DNA-binding region" description="H-T-H motif" evidence="4">
    <location>
        <begin position="63"/>
        <end position="86"/>
    </location>
</feature>
<feature type="DNA-binding region" description="H-T-H motif" evidence="4">
    <location>
        <begin position="115"/>
        <end position="138"/>
    </location>
</feature>
<feature type="DNA-binding region" description="H-T-H motif" evidence="4">
    <location>
        <begin position="166"/>
        <end position="189"/>
    </location>
</feature>
<feature type="region of interest" description="Interaction with HIPK2 and NLK" evidence="1">
    <location>
        <begin position="90"/>
        <end position="193"/>
    </location>
</feature>
<feature type="region of interest" description="Transcriptional activation domain" evidence="1">
    <location>
        <begin position="275"/>
        <end position="327"/>
    </location>
</feature>
<feature type="region of interest" description="Negative regulatory domain" evidence="1">
    <location>
        <begin position="328"/>
        <end position="464"/>
    </location>
</feature>
<feature type="region of interest" description="Disordered" evidence="5">
    <location>
        <begin position="338"/>
        <end position="368"/>
    </location>
</feature>
<feature type="region of interest" description="Leucine-zipper">
    <location>
        <begin position="375"/>
        <end position="396"/>
    </location>
</feature>
<feature type="modified residue" description="N6-acetyllysine" evidence="3">
    <location>
        <position position="471"/>
    </location>
</feature>
<feature type="modified residue" description="N6-acetyllysine; alternate" evidence="3">
    <location>
        <position position="480"/>
    </location>
</feature>
<feature type="modified residue" description="Phosphoserine" evidence="3">
    <location>
        <position position="532"/>
    </location>
</feature>
<feature type="modified residue" description="Phosphothreonine" evidence="3">
    <location>
        <position position="534"/>
    </location>
</feature>
<feature type="cross-link" description="Glycyl lysine isopeptide (Lys-Gly) (interchain with G-Cter in SUMO2); alternate" evidence="3">
    <location>
        <position position="480"/>
    </location>
</feature>
<feature type="cross-link" description="Glycyl lysine isopeptide (Lys-Gly) (interchain with G-Cter in SUMO1)" evidence="2">
    <location>
        <position position="503"/>
    </location>
</feature>
<feature type="cross-link" description="Glycyl lysine isopeptide (Lys-Gly) (interchain with G-Cter in SUMO1)" evidence="2">
    <location>
        <position position="527"/>
    </location>
</feature>
<gene>
    <name type="primary">MYB</name>
</gene>
<reference key="1">
    <citation type="journal article" date="1994" name="J. Biol. Chem.">
        <title>A spontaneous internal deletion of the c-myb protooncogene enhances transcriptional activation in bovine T lymphoma cells.</title>
        <authorList>
            <person name="Ishiguro N."/>
            <person name="Ohzono T."/>
            <person name="Shinagawa T."/>
            <person name="Horiuchi M."/>
            <person name="Shinagawa M."/>
        </authorList>
    </citation>
    <scope>NUCLEOTIDE SEQUENCE [MRNA]</scope>
    <source>
        <strain>Holstein</strain>
        <tissue>Lymphoma</tissue>
    </source>
</reference>